<feature type="chain" id="PRO_0000448032" description="Genome polyprotein">
    <location>
        <begin position="1"/>
        <end position="2370"/>
    </location>
</feature>
<feature type="chain" id="PRO_0000448033" description="Leader protein">
    <location>
        <begin position="1"/>
        <end position="111"/>
    </location>
</feature>
<feature type="chain" id="PRO_0000448034" description="Capsid protein VP0">
    <location>
        <begin position="112"/>
        <end position="479"/>
    </location>
</feature>
<feature type="chain" id="PRO_0000448035" description="Capsid protein VP3">
    <location>
        <begin position="480"/>
        <end position="702"/>
    </location>
</feature>
<feature type="chain" id="PRO_0000448036" description="Capsid protein VP1">
    <location>
        <begin position="703"/>
        <end position="952"/>
    </location>
</feature>
<feature type="chain" id="PRO_0000448037" description="Protein 2A">
    <location>
        <begin position="953"/>
        <end position="1097"/>
    </location>
</feature>
<feature type="chain" id="PRO_0000448038" description="Protein 2B">
    <location>
        <begin position="1098"/>
        <end position="1250"/>
    </location>
</feature>
<feature type="chain" id="PRO_0000448039" description="Protein 2C">
    <location>
        <begin position="1251"/>
        <end position="1596"/>
    </location>
</feature>
<feature type="chain" id="PRO_0000448040" description="Protein 3A">
    <location>
        <begin position="1597"/>
        <end position="1673"/>
    </location>
</feature>
<feature type="chain" id="PRO_0000448041" description="VPg">
    <location>
        <begin position="1674"/>
        <end position="1702"/>
    </location>
</feature>
<feature type="chain" id="PRO_0000448042" description="Protein 3CD">
    <location>
        <begin position="1703"/>
        <end position="2362"/>
    </location>
</feature>
<feature type="chain" id="PRO_0000448043" description="Protease 3C">
    <location>
        <begin position="1703"/>
        <end position="1897"/>
    </location>
</feature>
<feature type="chain" id="PRO_0000448044" description="RNA-directed RNA polymerase">
    <location>
        <begin position="1898"/>
        <end position="2362"/>
    </location>
</feature>
<feature type="transmembrane region" description="Helical" evidence="6">
    <location>
        <begin position="1646"/>
        <end position="1666"/>
    </location>
</feature>
<feature type="domain" description="SF3 helicase" evidence="8">
    <location>
        <begin position="1358"/>
        <end position="1522"/>
    </location>
</feature>
<feature type="domain" description="Peptidase C3" evidence="9">
    <location>
        <begin position="1697"/>
        <end position="1886"/>
    </location>
</feature>
<feature type="domain" description="RdRp catalytic" evidence="7">
    <location>
        <begin position="2122"/>
        <end position="2239"/>
    </location>
</feature>
<feature type="region of interest" description="Disordered" evidence="10">
    <location>
        <begin position="140"/>
        <end position="173"/>
    </location>
</feature>
<feature type="region of interest" description="Disordered" evidence="10">
    <location>
        <begin position="704"/>
        <end position="736"/>
    </location>
</feature>
<feature type="region of interest" description="Disordered" evidence="10">
    <location>
        <begin position="1674"/>
        <end position="1696"/>
    </location>
</feature>
<feature type="region of interest" description="Disordered" evidence="10">
    <location>
        <begin position="2007"/>
        <end position="2026"/>
    </location>
</feature>
<feature type="compositionally biased region" description="Low complexity" evidence="10">
    <location>
        <begin position="154"/>
        <end position="171"/>
    </location>
</feature>
<feature type="compositionally biased region" description="Polar residues" evidence="10">
    <location>
        <begin position="713"/>
        <end position="725"/>
    </location>
</feature>
<feature type="compositionally biased region" description="Polar residues" evidence="10">
    <location>
        <begin position="2007"/>
        <end position="2016"/>
    </location>
</feature>
<feature type="active site" description="For protease 3C activity" evidence="9">
    <location>
        <position position="1745"/>
    </location>
</feature>
<feature type="active site" description="For protease 3C activity" evidence="9">
    <location>
        <position position="1776"/>
    </location>
</feature>
<feature type="active site" description="For protease 3C activity" evidence="9">
    <location>
        <position position="1849"/>
    </location>
</feature>
<feature type="active site" description="For RdRp activity" evidence="5">
    <location>
        <position position="2128"/>
    </location>
</feature>
<feature type="active site" description="For RdRp activity" evidence="5">
    <location>
        <position position="2225"/>
    </location>
</feature>
<feature type="binding site" evidence="8">
    <location>
        <begin position="1384"/>
        <end position="1391"/>
    </location>
    <ligand>
        <name>ATP</name>
        <dbReference type="ChEBI" id="CHEBI:30616"/>
    </ligand>
</feature>
<feature type="site" description="Cleavage; by protease 3C" evidence="12">
    <location>
        <begin position="111"/>
        <end position="112"/>
    </location>
</feature>
<feature type="site" description="Cleavage; by protease 3C" evidence="4">
    <location>
        <begin position="479"/>
        <end position="480"/>
    </location>
</feature>
<feature type="site" description="Cleavage; by protease 3C" evidence="4">
    <location>
        <begin position="702"/>
        <end position="703"/>
    </location>
</feature>
<feature type="site" description="Cleavage; by protein 3CD" evidence="2">
    <location>
        <begin position="952"/>
        <end position="953"/>
    </location>
</feature>
<feature type="site" description="Cleavage; by protease 3C" evidence="4">
    <location>
        <begin position="1097"/>
        <end position="1098"/>
    </location>
</feature>
<feature type="site" description="Cleavage; by protease 3C" evidence="4">
    <location>
        <begin position="1250"/>
        <end position="1251"/>
    </location>
</feature>
<feature type="site" description="Cleavage; by protease 3C" evidence="4">
    <location>
        <begin position="1596"/>
        <end position="1597"/>
    </location>
</feature>
<feature type="site" description="Cleavage; by protease 3C" evidence="4">
    <location>
        <begin position="1673"/>
        <end position="1674"/>
    </location>
</feature>
<feature type="site" description="Cleavage; by protease 3C" evidence="4">
    <location>
        <begin position="1702"/>
        <end position="1703"/>
    </location>
</feature>
<feature type="site" description="Cleavage; by protease 3C" evidence="4">
    <location>
        <begin position="1897"/>
        <end position="1898"/>
    </location>
</feature>
<feature type="modified residue" description="O-(5'-phospho-RNA)-tyrosine" evidence="3">
    <location>
        <position position="1676"/>
    </location>
</feature>
<feature type="lipid moiety-binding region" description="N-myristoyl glycine; by host" evidence="3">
    <location>
        <position position="112"/>
    </location>
</feature>
<feature type="lipid moiety-binding region" description="N-myristoyl glycine; by host" evidence="11">
    <location>
        <position position="1597"/>
    </location>
</feature>
<dbReference type="EC" id="3.6.4.13" evidence="3"/>
<dbReference type="EC" id="3.4.22.28" evidence="9"/>
<dbReference type="EC" id="2.7.7.48" evidence="7"/>
<dbReference type="EMBL" id="GQ184145">
    <property type="protein sequence ID" value="ACS91540.1"/>
    <property type="molecule type" value="Genomic_RNA"/>
</dbReference>
<dbReference type="RefSeq" id="YP_003065643.1">
    <property type="nucleotide sequence ID" value="NC_012986.1"/>
</dbReference>
<dbReference type="SMR" id="C6KEF6"/>
<dbReference type="IntAct" id="C6KEF6">
    <property type="interactions" value="1"/>
</dbReference>
<dbReference type="iPTMnet" id="C6KEF6"/>
<dbReference type="GeneID" id="8187145"/>
<dbReference type="KEGG" id="vg:8187145"/>
<dbReference type="Proteomes" id="UP000126165">
    <property type="component" value="Segment"/>
</dbReference>
<dbReference type="GO" id="GO:0044162">
    <property type="term" value="C:host cell cytoplasmic vesicle membrane"/>
    <property type="evidence" value="ECO:0007669"/>
    <property type="project" value="UniProtKB-SubCell"/>
</dbReference>
<dbReference type="GO" id="GO:0044178">
    <property type="term" value="C:host cell Golgi membrane"/>
    <property type="evidence" value="ECO:0007669"/>
    <property type="project" value="UniProtKB-SubCell"/>
</dbReference>
<dbReference type="GO" id="GO:0016020">
    <property type="term" value="C:membrane"/>
    <property type="evidence" value="ECO:0007669"/>
    <property type="project" value="UniProtKB-KW"/>
</dbReference>
<dbReference type="GO" id="GO:0039618">
    <property type="term" value="C:T=pseudo3 icosahedral viral capsid"/>
    <property type="evidence" value="ECO:0007669"/>
    <property type="project" value="UniProtKB-KW"/>
</dbReference>
<dbReference type="GO" id="GO:0005524">
    <property type="term" value="F:ATP binding"/>
    <property type="evidence" value="ECO:0007669"/>
    <property type="project" value="UniProtKB-KW"/>
</dbReference>
<dbReference type="GO" id="GO:0016887">
    <property type="term" value="F:ATP hydrolysis activity"/>
    <property type="evidence" value="ECO:0007669"/>
    <property type="project" value="RHEA"/>
</dbReference>
<dbReference type="GO" id="GO:0015267">
    <property type="term" value="F:channel activity"/>
    <property type="evidence" value="ECO:0007669"/>
    <property type="project" value="UniProtKB-KW"/>
</dbReference>
<dbReference type="GO" id="GO:0004197">
    <property type="term" value="F:cysteine-type endopeptidase activity"/>
    <property type="evidence" value="ECO:0007669"/>
    <property type="project" value="UniProtKB-EC"/>
</dbReference>
<dbReference type="GO" id="GO:0003723">
    <property type="term" value="F:RNA binding"/>
    <property type="evidence" value="ECO:0007669"/>
    <property type="project" value="UniProtKB-KW"/>
</dbReference>
<dbReference type="GO" id="GO:0003724">
    <property type="term" value="F:RNA helicase activity"/>
    <property type="evidence" value="ECO:0007669"/>
    <property type="project" value="UniProtKB-EC"/>
</dbReference>
<dbReference type="GO" id="GO:0003968">
    <property type="term" value="F:RNA-directed RNA polymerase activity"/>
    <property type="evidence" value="ECO:0007669"/>
    <property type="project" value="UniProtKB-KW"/>
</dbReference>
<dbReference type="GO" id="GO:0005198">
    <property type="term" value="F:structural molecule activity"/>
    <property type="evidence" value="ECO:0007669"/>
    <property type="project" value="InterPro"/>
</dbReference>
<dbReference type="GO" id="GO:0006351">
    <property type="term" value="P:DNA-templated transcription"/>
    <property type="evidence" value="ECO:0007669"/>
    <property type="project" value="InterPro"/>
</dbReference>
<dbReference type="GO" id="GO:0034220">
    <property type="term" value="P:monoatomic ion transmembrane transport"/>
    <property type="evidence" value="ECO:0007669"/>
    <property type="project" value="UniProtKB-KW"/>
</dbReference>
<dbReference type="GO" id="GO:0006508">
    <property type="term" value="P:proteolysis"/>
    <property type="evidence" value="ECO:0007669"/>
    <property type="project" value="UniProtKB-KW"/>
</dbReference>
<dbReference type="GO" id="GO:0046718">
    <property type="term" value="P:symbiont entry into host cell"/>
    <property type="evidence" value="ECO:0007669"/>
    <property type="project" value="UniProtKB-KW"/>
</dbReference>
<dbReference type="GO" id="GO:0039522">
    <property type="term" value="P:symbiont-mediated suppression of host mRNA export from nucleus"/>
    <property type="evidence" value="ECO:0007669"/>
    <property type="project" value="UniProtKB-KW"/>
</dbReference>
<dbReference type="GO" id="GO:0039694">
    <property type="term" value="P:viral RNA genome replication"/>
    <property type="evidence" value="ECO:0007669"/>
    <property type="project" value="InterPro"/>
</dbReference>
<dbReference type="GO" id="GO:0019062">
    <property type="term" value="P:virion attachment to host cell"/>
    <property type="evidence" value="ECO:0007669"/>
    <property type="project" value="UniProtKB-KW"/>
</dbReference>
<dbReference type="CDD" id="cd00205">
    <property type="entry name" value="rhv_like"/>
    <property type="match status" value="3"/>
</dbReference>
<dbReference type="Gene3D" id="1.20.960.20">
    <property type="match status" value="1"/>
</dbReference>
<dbReference type="Gene3D" id="2.60.120.20">
    <property type="match status" value="4"/>
</dbReference>
<dbReference type="Gene3D" id="3.30.70.270">
    <property type="match status" value="2"/>
</dbReference>
<dbReference type="Gene3D" id="2.40.10.10">
    <property type="entry name" value="Trypsin-like serine proteases"/>
    <property type="match status" value="1"/>
</dbReference>
<dbReference type="InterPro" id="IPR043502">
    <property type="entry name" value="DNA/RNA_pol_sf"/>
</dbReference>
<dbReference type="InterPro" id="IPR004004">
    <property type="entry name" value="Helic/Pol/Pept_Calicivir-typ"/>
</dbReference>
<dbReference type="InterPro" id="IPR000605">
    <property type="entry name" value="Helicase_SF3_ssDNA/RNA_vir"/>
</dbReference>
<dbReference type="InterPro" id="IPR014759">
    <property type="entry name" value="Helicase_SF3_ssRNA_vir"/>
</dbReference>
<dbReference type="InterPro" id="IPR027417">
    <property type="entry name" value="P-loop_NTPase"/>
</dbReference>
<dbReference type="InterPro" id="IPR044067">
    <property type="entry name" value="PCV_3C_PRO"/>
</dbReference>
<dbReference type="InterPro" id="IPR009003">
    <property type="entry name" value="Peptidase_S1_PA"/>
</dbReference>
<dbReference type="InterPro" id="IPR043504">
    <property type="entry name" value="Peptidase_S1_PA_chymotrypsin"/>
</dbReference>
<dbReference type="InterPro" id="IPR001676">
    <property type="entry name" value="Picornavirus_capsid"/>
</dbReference>
<dbReference type="InterPro" id="IPR043128">
    <property type="entry name" value="Rev_trsase/Diguanyl_cyclase"/>
</dbReference>
<dbReference type="InterPro" id="IPR033703">
    <property type="entry name" value="Rhv-like"/>
</dbReference>
<dbReference type="InterPro" id="IPR001205">
    <property type="entry name" value="RNA-dir_pol_C"/>
</dbReference>
<dbReference type="InterPro" id="IPR007094">
    <property type="entry name" value="RNA-dir_pol_PSvirus"/>
</dbReference>
<dbReference type="InterPro" id="IPR029053">
    <property type="entry name" value="Viral_coat"/>
</dbReference>
<dbReference type="Pfam" id="PF00680">
    <property type="entry name" value="RdRP_1"/>
    <property type="match status" value="1"/>
</dbReference>
<dbReference type="Pfam" id="PF00073">
    <property type="entry name" value="Rhv"/>
    <property type="match status" value="2"/>
</dbReference>
<dbReference type="Pfam" id="PF22663">
    <property type="entry name" value="Rhv_5"/>
    <property type="match status" value="1"/>
</dbReference>
<dbReference type="Pfam" id="PF00910">
    <property type="entry name" value="RNA_helicase"/>
    <property type="match status" value="1"/>
</dbReference>
<dbReference type="PRINTS" id="PR00918">
    <property type="entry name" value="CALICVIRUSNS"/>
</dbReference>
<dbReference type="SUPFAM" id="SSF56672">
    <property type="entry name" value="DNA/RNA polymerases"/>
    <property type="match status" value="1"/>
</dbReference>
<dbReference type="SUPFAM" id="SSF52540">
    <property type="entry name" value="P-loop containing nucleoside triphosphate hydrolases"/>
    <property type="match status" value="1"/>
</dbReference>
<dbReference type="SUPFAM" id="SSF88633">
    <property type="entry name" value="Positive stranded ssRNA viruses"/>
    <property type="match status" value="2"/>
</dbReference>
<dbReference type="SUPFAM" id="SSF50494">
    <property type="entry name" value="Trypsin-like serine proteases"/>
    <property type="match status" value="1"/>
</dbReference>
<dbReference type="PROSITE" id="PS51874">
    <property type="entry name" value="PCV_3C_PRO"/>
    <property type="match status" value="1"/>
</dbReference>
<dbReference type="PROSITE" id="PS50507">
    <property type="entry name" value="RDRP_SSRNA_POS"/>
    <property type="match status" value="1"/>
</dbReference>
<dbReference type="PROSITE" id="PS51218">
    <property type="entry name" value="SF3_HELICASE_2"/>
    <property type="match status" value="1"/>
</dbReference>
<name>POLG_HKV1</name>
<keyword id="KW-0067">ATP-binding</keyword>
<keyword id="KW-0167">Capsid protein</keyword>
<keyword id="KW-0191">Covalent protein-RNA linkage</keyword>
<keyword id="KW-1262">Eukaryotic host gene expression shutoff by virus</keyword>
<keyword id="KW-1193">Eukaryotic host translation shutoff by virus</keyword>
<keyword id="KW-0347">Helicase</keyword>
<keyword id="KW-1035">Host cytoplasm</keyword>
<keyword id="KW-1036">Host cytoplasmic vesicle</keyword>
<keyword id="KW-1190">Host gene expression shutoff by virus</keyword>
<keyword id="KW-1040">Host Golgi apparatus</keyword>
<keyword id="KW-1043">Host membrane</keyword>
<keyword id="KW-1192">Host mRNA suppression by virus</keyword>
<keyword id="KW-0945">Host-virus interaction</keyword>
<keyword id="KW-0378">Hydrolase</keyword>
<keyword id="KW-1099">Inhibition of host mRNA nuclear export by virus</keyword>
<keyword id="KW-0407">Ion channel</keyword>
<keyword id="KW-0406">Ion transport</keyword>
<keyword id="KW-0449">Lipoprotein</keyword>
<keyword id="KW-0472">Membrane</keyword>
<keyword id="KW-0519">Myristate</keyword>
<keyword id="KW-0547">Nucleotide-binding</keyword>
<keyword id="KW-0548">Nucleotidyltransferase</keyword>
<keyword id="KW-0597">Phosphoprotein</keyword>
<keyword id="KW-0645">Protease</keyword>
<keyword id="KW-0694">RNA-binding</keyword>
<keyword id="KW-0696">RNA-directed RNA polymerase</keyword>
<keyword id="KW-1143">T=pseudo3 icosahedral capsid protein</keyword>
<keyword id="KW-0788">Thiol protease</keyword>
<keyword id="KW-0808">Transferase</keyword>
<keyword id="KW-0812">Transmembrane</keyword>
<keyword id="KW-1133">Transmembrane helix</keyword>
<keyword id="KW-0813">Transport</keyword>
<keyword id="KW-1161">Viral attachment to host cell</keyword>
<keyword id="KW-1182">Viral ion channel</keyword>
<keyword id="KW-0693">Viral RNA replication</keyword>
<keyword id="KW-0946">Virion</keyword>
<keyword id="KW-1160">Virus entry into host cell</keyword>
<organismHost>
    <name type="scientific">Homo sapiens</name>
    <name type="common">Human</name>
    <dbReference type="NCBI Taxonomy" id="9606"/>
</organismHost>
<accession>C6KEF6</accession>
<comment type="function">
    <molecule>Leader protein</molecule>
    <text evidence="2">Required for viral RNA replication and viral RNA encapsidation (By similarity). Does not have any proteolytic activity (By similarity).</text>
</comment>
<comment type="function">
    <molecule>Capsid protein VP1</molecule>
    <text evidence="2">Forms an icosahedral capsid of pseudo T=3 symmetry with capsid proteins VP0 and VP3 (By similarity). Together they form an icosahedral capsid composed of 60 copies of each VP0, VP1, and VP3 (By similarity). All the three latter proteins contain a beta-sheet structure called beta-barrel jelly roll (By similarity).</text>
</comment>
<comment type="function">
    <molecule>Capsid protein VP0</molecule>
    <text evidence="2">Forms an icosahedral capsid of pseudo T=3 symmetry with capsid proteins VP1 and VP3 (By similarity). Together they form an icosahedral capsid composed of 60 copies of each VP0, VP1, and VP3 (By similarity). All the three latter proteins contain a beta-sheet structure called beta-barrel jelly roll (By similarity).</text>
</comment>
<comment type="function">
    <molecule>Capsid protein VP3</molecule>
    <text evidence="2">Forms an icosahedral capsid of pseudo T=3 symmetry with capsid proteins VP0 and VP1 (By similarity). Together they form an icosahedral capsid composed of 60 copies of each VP0, VP1, and VP3 (By similarity). All the three latter proteins contain a beta-sheet structure called beta-barrel jelly roll (By similarity).</text>
</comment>
<comment type="function">
    <molecule>Protein 2A</molecule>
    <text evidence="2">Required for viral RNA replication (By similarity). Does not have any proteolytic activity (By similarity).</text>
</comment>
<comment type="function">
    <molecule>Protein 2B</molecule>
    <text evidence="1">Affects membrane integrity and causes an increase in membrane permeability.</text>
</comment>
<comment type="function">
    <molecule>Protein 2C</molecule>
    <text evidence="3">Induces and associates with structural rearrangements of intracellular membranes. Displays RNA-binding, nucleotide binding and NTPase activities. May play a role in virion morphogenesis and viral RNA encapsidation by interacting with the capsid protein VP3.</text>
</comment>
<comment type="function">
    <molecule>Protein 3A</molecule>
    <text evidence="2">Serves as membrane anchor via its hydrophobic domain. Plays an essential role in viral RNA replication by recruiting PI4KB at the viral replication sites, thereby allowing the formation of rearranged membranous structures where viral replication takes place (By similarity).</text>
</comment>
<comment type="function">
    <molecule>VPg</molecule>
    <text evidence="4">Forms a primer, VPg-pU, which is utilized by the polymerase for the initiation of RNA chains.</text>
</comment>
<comment type="function">
    <molecule>Protease 3C</molecule>
    <text evidence="4 5">Cysteine protease that generates mature viral proteins from the precursor polyprotein (By similarity). In addition to its proteolytic activity, it binds to viral RNA, and thus influences viral genome replication. RNA and substrate cooperatively bind to the protease (By similarity).</text>
</comment>
<comment type="function">
    <molecule>RNA-directed RNA polymerase</molecule>
    <text evidence="5">Replicates the genomic and antigenomic RNAs by recognizing replications specific signals (By similarity). Performs VPg uridylylation (By similarity).</text>
</comment>
<comment type="catalytic activity">
    <reaction evidence="7">
        <text>RNA(n) + a ribonucleoside 5'-triphosphate = RNA(n+1) + diphosphate</text>
        <dbReference type="Rhea" id="RHEA:21248"/>
        <dbReference type="Rhea" id="RHEA-COMP:14527"/>
        <dbReference type="Rhea" id="RHEA-COMP:17342"/>
        <dbReference type="ChEBI" id="CHEBI:33019"/>
        <dbReference type="ChEBI" id="CHEBI:61557"/>
        <dbReference type="ChEBI" id="CHEBI:140395"/>
        <dbReference type="EC" id="2.7.7.48"/>
    </reaction>
</comment>
<comment type="catalytic activity">
    <reaction evidence="9">
        <text>Selective cleavage of Gln-|-Gly bond in the poliovirus polyprotein. In other picornavirus reactions Glu may be substituted for Gln, and Ser or Thr for Gly.</text>
        <dbReference type="EC" id="3.4.22.28"/>
    </reaction>
</comment>
<comment type="catalytic activity">
    <reaction evidence="3">
        <text>ATP + H2O = ADP + phosphate + H(+)</text>
        <dbReference type="Rhea" id="RHEA:13065"/>
        <dbReference type="ChEBI" id="CHEBI:15377"/>
        <dbReference type="ChEBI" id="CHEBI:15378"/>
        <dbReference type="ChEBI" id="CHEBI:30616"/>
        <dbReference type="ChEBI" id="CHEBI:43474"/>
        <dbReference type="ChEBI" id="CHEBI:456216"/>
        <dbReference type="EC" id="3.6.4.13"/>
    </reaction>
</comment>
<comment type="subunit">
    <molecule>Capsid protein VP0</molecule>
    <text evidence="2">Interacts with capsid protein VP1 (By similarity). Interacts with capsid protein VP3 (By similarity).</text>
</comment>
<comment type="subunit">
    <molecule>Capsid protein VP1</molecule>
    <text evidence="2">Interacts with capsid protein VP0 (By similarity). Interacts with capsid protein VP3 (By similarity).</text>
</comment>
<comment type="subunit">
    <molecule>Capsid protein VP3</molecule>
    <text evidence="2">Interacts with capsid protein VP0 (By similarity). Interacts with capsid protein VP1 (By similarity).</text>
</comment>
<comment type="subunit">
    <molecule>Protein 2A</molecule>
    <text evidence="2">Homodimer. Interacts with protein 2B (By similarity). Interacts with protein 2C (By similarity).</text>
</comment>
<comment type="subunit">
    <molecule>Protein 2B</molecule>
    <text evidence="2">Homodimer. Interacts with host ABCD3. Interacts with protein 2A (By similarity). Interacts with host ACBD3 (By similarity).</text>
</comment>
<comment type="subunit">
    <molecule>Protein 2C</molecule>
    <text evidence="2">Homodimer. Interacts with host ABCD3 (By similarity). Interacts with protein 2A (By similarity). Interacts with protein 3A (By similarity). Interacts with protein 3C (By similarity). Interacts with host ACBD3 (By similarity).</text>
</comment>
<comment type="subunit">
    <molecule>Protein 3A</molecule>
    <text evidence="2 13">Homodimer (By similarity). Interacts with host ABCD3 (via GOLD domain) and PI4KB; these interactions allow the formation of a viral protein/ACBD3/PI4KB complex in order to synthesize PI4P at the viral RNA replication sites (Probable). Interacts with protein 2C (By similarity). Interacts with protein 3C (By similarity). Protein 3C: Interacts with protein 2A (By similarity). Protein 3C: Interacts with protein 2C (By similarity).</text>
</comment>
<comment type="subcellular location">
    <molecule>Capsid protein VP0</molecule>
    <subcellularLocation>
        <location evidence="2">Virion</location>
    </subcellularLocation>
    <subcellularLocation>
        <location evidence="5">Host cytoplasm</location>
    </subcellularLocation>
</comment>
<comment type="subcellular location">
    <molecule>Capsid protein VP3</molecule>
    <subcellularLocation>
        <location evidence="2">Virion</location>
    </subcellularLocation>
    <subcellularLocation>
        <location evidence="5">Host cytoplasm</location>
    </subcellularLocation>
</comment>
<comment type="subcellular location">
    <molecule>Capsid protein VP1</molecule>
    <subcellularLocation>
        <location evidence="2">Virion</location>
    </subcellularLocation>
    <subcellularLocation>
        <location evidence="5">Host cytoplasm</location>
    </subcellularLocation>
</comment>
<comment type="subcellular location">
    <molecule>Protein 2B</molecule>
    <subcellularLocation>
        <location evidence="4">Host cytoplasmic vesicle membrane</location>
        <topology evidence="4">Peripheral membrane protein</topology>
        <orientation evidence="4">Cytoplasmic side</orientation>
    </subcellularLocation>
    <text evidence="4">Probably localizes to the surface of intracellular membrane vesicles that are induced after virus infection as the site for viral RNA replication. These vesicles are probably autophagosome-like vesicles.</text>
</comment>
<comment type="subcellular location">
    <molecule>Protein 2C</molecule>
    <subcellularLocation>
        <location evidence="4">Host cytoplasmic vesicle membrane</location>
        <topology evidence="4">Peripheral membrane protein</topology>
        <orientation evidence="4">Cytoplasmic side</orientation>
    </subcellularLocation>
    <text evidence="4">Probably localizes to the surface of intracellular membrane vesicles that are induced after virus infection as the site for viral RNA replication. These vesicles are probably autophagosome-like vesicles.</text>
</comment>
<comment type="subcellular location">
    <molecule>Protein 3A</molecule>
    <subcellularLocation>
        <location evidence="4">Host cytoplasmic vesicle membrane</location>
        <topology evidence="6">Single-pass membrane protein</topology>
    </subcellularLocation>
    <subcellularLocation>
        <location evidence="2">Host Golgi apparatus membrane</location>
        <topology evidence="6">Single-pass membrane protein</topology>
    </subcellularLocation>
    <text evidence="4">Probably localizes to intracellular membrane vesicles that are induced after virus infection as the site for viral RNA replication.</text>
</comment>
<comment type="subcellular location">
    <molecule>VPg</molecule>
    <subcellularLocation>
        <location evidence="4">Virion</location>
    </subcellularLocation>
</comment>
<comment type="subcellular location">
    <molecule>Protease 3C</molecule>
    <subcellularLocation>
        <location evidence="4">Host cytoplasm</location>
    </subcellularLocation>
</comment>
<comment type="subcellular location">
    <molecule>RNA-directed RNA polymerase</molecule>
    <subcellularLocation>
        <location evidence="4">Host cytoplasmic vesicle membrane</location>
        <topology evidence="4">Peripheral membrane protein</topology>
        <orientation evidence="4">Cytoplasmic side</orientation>
    </subcellularLocation>
    <text evidence="4">Probably localizes to the surface of intracellular membrane vesicles that are induced after virus infection as the site for viral RNA replication. These vesicles are probably autophagosome-like vesicles.</text>
</comment>
<comment type="PTM">
    <molecule>Genome polyprotein</molecule>
    <text evidence="2 3">Specific enzymatic cleavages by the viral protease in vivo yield a variety of precursors and mature proteins (By similarity). The leader protein-VP0 junction is cleaved by 3C proteinase (By similarity). The VP1/2A junction is cleaved by the protein 3CD in association with protein 2A (By similarity).</text>
</comment>
<comment type="PTM">
    <molecule>VPg</molecule>
    <text evidence="5">Uridylylated by the polymerase and is covalently linked to the 5'-end of genomic RNA. This uridylylated form acts as a nucleotide-peptide primer for the polymerase.</text>
</comment>
<protein>
    <recommendedName>
        <fullName>Genome polyprotein</fullName>
    </recommendedName>
    <component>
        <recommendedName>
            <fullName>Leader protein</fullName>
            <shortName>L</shortName>
        </recommendedName>
    </component>
    <component>
        <recommendedName>
            <fullName>Capsid protein VP0</fullName>
        </recommendedName>
    </component>
    <component>
        <recommendedName>
            <fullName>Capsid protein VP3</fullName>
        </recommendedName>
        <alternativeName>
            <fullName>P1C</fullName>
        </alternativeName>
        <alternativeName>
            <fullName>Virion protein 3</fullName>
        </alternativeName>
    </component>
    <component>
        <recommendedName>
            <fullName>Capsid protein VP1</fullName>
        </recommendedName>
        <alternativeName>
            <fullName>P1D</fullName>
        </alternativeName>
        <alternativeName>
            <fullName>Virion protein 1</fullName>
        </alternativeName>
    </component>
    <component>
        <recommendedName>
            <fullName>Protein 2A</fullName>
            <shortName>P2A</shortName>
        </recommendedName>
    </component>
    <component>
        <recommendedName>
            <fullName>Protein 2B</fullName>
            <shortName>P2B</shortName>
        </recommendedName>
    </component>
    <component>
        <recommendedName>
            <fullName>Protein 2C</fullName>
            <shortName>P2C</shortName>
            <ecNumber evidence="3">3.6.4.13</ecNumber>
        </recommendedName>
    </component>
    <component>
        <recommendedName>
            <fullName>Protein 3A</fullName>
            <shortName>P3A</shortName>
        </recommendedName>
    </component>
    <component>
        <recommendedName>
            <fullName>VPg</fullName>
            <shortName>P3B</shortName>
        </recommendedName>
        <alternativeName>
            <fullName>Protein 3B</fullName>
        </alternativeName>
    </component>
    <component>
        <recommendedName>
            <fullName>Protein 3CD</fullName>
            <ecNumber>3.4.22.28</ecNumber>
        </recommendedName>
    </component>
    <component>
        <recommendedName>
            <fullName evidence="9">Protease 3C</fullName>
            <ecNumber evidence="9">3.4.22.28</ecNumber>
        </recommendedName>
        <alternativeName>
            <fullName evidence="9">Picornain 3C</fullName>
            <shortName evidence="9">P3C</shortName>
        </alternativeName>
    </component>
    <component>
        <recommendedName>
            <fullName>RNA-directed RNA polymerase</fullName>
            <shortName>RdRp</shortName>
            <ecNumber evidence="7">2.7.7.48</ecNumber>
        </recommendedName>
        <alternativeName>
            <fullName>3D polymerase</fullName>
            <shortName>3Dpol</shortName>
        </alternativeName>
        <alternativeName>
            <fullName>Protein 3D</fullName>
            <shortName>3D</shortName>
        </alternativeName>
    </component>
</protein>
<proteinExistence type="evidence at protein level"/>
<organism>
    <name type="scientific">Human klassevirus 1</name>
    <name type="common">HKV-1</name>
    <dbReference type="NCBI Taxonomy" id="655603"/>
    <lineage>
        <taxon>Viruses</taxon>
        <taxon>Riboviria</taxon>
        <taxon>Orthornavirae</taxon>
        <taxon>Pisuviricota</taxon>
        <taxon>Pisoniviricetes</taxon>
        <taxon>Picornavirales</taxon>
        <taxon>Picornaviridae</taxon>
        <taxon>Kodimesavirinae</taxon>
        <taxon>Salivirus</taxon>
        <taxon>Salivirus A</taxon>
    </lineage>
</organism>
<sequence length="2370" mass="255138">MMEGSNGFSSSLAGLSSSRSSLRLLTHLLSLPPPNRDARRHSGWYRSPPTLPVNVYLNEQFDNLCLAALRYPGCKLYPSVYTLFPDVSPFKIPQSIPAFAHLVQRQGLRRQGNPTTNIYGNGNEVTTDVGANGMSLPIAVGDMPTASSSEAPLGSNKGGSSTSPKSTSNGNVVRGSRYSKWWEPAAARALDRALDHAVDATDAVAGAASKGIKAGATKLSNKLAGSQTTALLALPGNIAGGAPSATVNANNTSISSQALLPSVNPYPSTPAVSLPNPDAPTQVGPAADRQWLVDTIPWSETTPPLTVFSGPKALTPGTYPPTIEPNTGVYPLPAALCVSHPESVFTTAYNAHAYFNCGFDVTVVVNASQFHGGSLIVLAMAEGLGDITPADSSTWFNFPHAIINLANSNSATLKLPYIGVTPNTSTEGLHNYWTILFAPLTPLAVPTGSPTSVKVSLFVSPIDSAFYGLRFPIPFPTPQHWKTRAVPGAGSYGSVVAGQEIPLVGYAPAAPPRDYLPGRVRNWLEYAARHSWERNLPWTAADEVGDQLVSYPIQPETLANTQTNTAFVLSLFSQWRGSLQISLIFTGPAQCYGRLLLAYTPPSANPPTTIEEANNGTYDVWDVNGDSTYTFTIPFCSQAYWKTVDIGTSSGLVSNNGYFTIFVMNPLVTPGPSPPSATVAAFLHVADDFDVRLPQCPALGFQSGADGAEVQPAPTSDLSDGNPTTDPAPRDNFDYPHHPVDPSTDLAFYFSQYRWFGLNEDLTPLNVTGGLFYHVSLNPVNFQQNSLLSVLGAFTYVYANLSLNINVSAPLQACTFYIFYAPPGASVPSTQTLAELSFFTHTATPLNLAAPTNITVSIPYASPQSVLCTSFGGFGLQNGGDPGNLHSNTWGTLILYVDLPQSDSVSVSAYISFRDFEAYVPRQTPGVGPIPTSTSIVRVARPTPKPRTVRRQGGTLADLILTPESRCFIVAHTTAPYYSILLVNPDEEYAISMFTHGDESILRYSSRGGTRLAPTAPAFFLCAAASVDTILPYPISQSHLWLSDLTGIPLRAVPPLTLFLSAGAALCAGAQTLIAVAQGGSAPDTPPTPNRALFRRQGLGDLPDAAKGLSAALENVAKVAGDADIATSSQAIASSINSLSNSIDGATTFMQNFFSGLAPKNPTSPLQHLFAKLIKWVTKIIGSLIIICNNPTPSALIGVSLMLCGDLAEDITEFFSNLGNPLAAVFYRCARALGLSPTPQSAAQAAGGRQGVRDYNDIMSALRNTDWFFEKIMSHIKNLLEWLGVLVKDDPRTKLNSQHEKILELYTDSVTASSTPPSELSADAIRSNLDLAKQLLTLSHAANSVTHIQLCTRAITNYSTALSAISLVGTPGTRPEPLVVYLYGPPGTGKSLLASLLASTLAQALSGDPNNYYSPSSPDCKFYDGYSGQPVHYIDDIGQDPDGADWADFVNIVSSAPFIVPMADVNDKGRFYTSRVVIVTSNFPGPNPRSARCVAALERRLHIRLNVTARDGAAFSAAAALKPSEPLAATRYCKFSNPLTQFSMFNLAVDYKSIVLPNTPLSCFDELIDFILGSLRDRASVNSLLSGMVRTDVARQGGNADAPAPSAAPLPSVLPSVPSQDPFVRAVNENRPVSFLSKIWSWRAPIFAASSFLSLIAATLTIVRCLRDLRSTQGAYSGTPVPKPRKKDLPKQPVYSGPVRRQGFDPAVMKIMGNVDSFVTLSGSKPIWTMSCLWIGGRNLIAPSHAFVSDDYEITHIRVGSRTLDVSRVTRVDDGELSLISVPDGPEHKSLIRYIRSASPKSGILASKFSDTPVFVSFWNGKPHSTPLPGVVDEKDSFTYRCSSFQGLCGSPMIATDPGGLGILGIHVAGVAGYNGFSARLTPERVQAFLSNLATPQSVLHFHPPMGPPAHVSRRSRLHPSPAFGAFPITKEPAALSRKDPRLPEGTDLDAITLAKHDKGDIATPWPCMEEAADWYFSQLPDSLPVLSQEDAIRGLDHMDAIDLSQSPGYPWTTQGRSRRSLFDEDGNPVPELQKAIDSVWDGGSYIYQSFLKDELRPTAKARAGKTRIVEAAPIQAIVVGRRLLGSLINHLQGNPLQYGSAVGCNPDIHWTQIFHSLTPFSNVWSIDYSCFDATIPSVLLSAIASRIASRSDQPGRVLDYLSYTTTSYHVYDSLWYTMVGGNPSGCVGTSILNTIANNIAIISAMMYCNKFDPRDPPVLYCYGDDLIWGSNQDFHPRELQAFYQKFTNFVVTPADKASDFPDSSSIYDITFLKRYFVPDDIHPHLIHPVMDEATLTNSIMWLRGGEFEEVLRSLETLAFHSGPNNYSTWCEKIKAKIRENGCDATFTPYSVLQRGWVSTCMTGPYPLTG</sequence>
<evidence type="ECO:0000250" key="1"/>
<evidence type="ECO:0000250" key="2">
    <source>
        <dbReference type="UniProtKB" id="O91464"/>
    </source>
</evidence>
<evidence type="ECO:0000250" key="3">
    <source>
        <dbReference type="UniProtKB" id="P03300"/>
    </source>
</evidence>
<evidence type="ECO:0000250" key="4">
    <source>
        <dbReference type="UniProtKB" id="P03304"/>
    </source>
</evidence>
<evidence type="ECO:0000250" key="5">
    <source>
        <dbReference type="UniProtKB" id="P12296"/>
    </source>
</evidence>
<evidence type="ECO:0000255" key="6"/>
<evidence type="ECO:0000255" key="7">
    <source>
        <dbReference type="PROSITE-ProRule" id="PRU00539"/>
    </source>
</evidence>
<evidence type="ECO:0000255" key="8">
    <source>
        <dbReference type="PROSITE-ProRule" id="PRU00551"/>
    </source>
</evidence>
<evidence type="ECO:0000255" key="9">
    <source>
        <dbReference type="PROSITE-ProRule" id="PRU01222"/>
    </source>
</evidence>
<evidence type="ECO:0000256" key="10">
    <source>
        <dbReference type="SAM" id="MobiDB-lite"/>
    </source>
</evidence>
<evidence type="ECO:0000269" key="11">
    <source>
    </source>
</evidence>
<evidence type="ECO:0000305" key="12"/>
<evidence type="ECO:0000305" key="13">
    <source>
    </source>
</evidence>
<evidence type="ECO:0000312" key="14">
    <source>
        <dbReference type="EMBL" id="ACS91540.1"/>
    </source>
</evidence>
<reference key="1">
    <citation type="journal article" date="2009" name="Virol. J.">
        <title>The complete genome of klassevirus - a novel picornavirus in pediatric stool.</title>
        <authorList>
            <person name="Greninger A.L."/>
            <person name="Runckel C."/>
            <person name="Chiu C.Y."/>
            <person name="Haggerty T."/>
            <person name="Parsonnet J."/>
            <person name="Ganem D."/>
            <person name="DeRisi J.L."/>
        </authorList>
    </citation>
    <scope>NUCLEOTIDE SEQUENCE [LARGE SCALE GENOMIC DNA]</scope>
    <source>
        <strain evidence="14">02394-01</strain>
    </source>
</reference>
<reference key="2">
    <citation type="journal article" date="2012" name="J. Virol.">
        <title>The 3A protein from multiple picornaviruses utilizes the golgi adaptor protein ACBD3 to recruit PI4KIIIbeta.</title>
        <authorList>
            <person name="Greninger A.L."/>
            <person name="Knudsen G.M."/>
            <person name="Betegon M."/>
            <person name="Burlingame A.L."/>
            <person name="Derisi J.L."/>
        </authorList>
    </citation>
    <scope>MYRISTOYLATION AT GLY-1597</scope>
</reference>
<reference key="3">
    <citation type="journal article" date="2013" name="MBio">
        <title>ACBD3 interaction with TBC1 domain 22 protein is differentially affected by enteroviral and kobuviral 3A protein binding.</title>
        <authorList>
            <person name="Greninger A.L."/>
            <person name="Knudsen G.M."/>
            <person name="Betegon M."/>
            <person name="Burlingame A.L."/>
            <person name="DeRisi J.L."/>
        </authorList>
    </citation>
    <scope>INTERACTION WITH HOST ACBD3</scope>
</reference>